<reference key="1">
    <citation type="journal article" date="2008" name="J. Bacteriol.">
        <title>Comparative genome sequence analysis of multidrug-resistant Acinetobacter baumannii.</title>
        <authorList>
            <person name="Adams M.D."/>
            <person name="Goglin K."/>
            <person name="Molyneaux N."/>
            <person name="Hujer K.M."/>
            <person name="Lavender H."/>
            <person name="Jamison J.J."/>
            <person name="MacDonald I.J."/>
            <person name="Martin K.M."/>
            <person name="Russo T."/>
            <person name="Campagnari A.A."/>
            <person name="Hujer A.M."/>
            <person name="Bonomo R.A."/>
            <person name="Gill S.R."/>
        </authorList>
    </citation>
    <scope>NUCLEOTIDE SEQUENCE [LARGE SCALE GENOMIC DNA]</scope>
    <source>
        <strain>AB0057</strain>
    </source>
</reference>
<keyword id="KW-0884">PQQ biosynthesis</keyword>
<keyword id="KW-0813">Transport</keyword>
<name>PQQB_ACIB5</name>
<dbReference type="EMBL" id="CP001182">
    <property type="protein sequence ID" value="ACJ41362.1"/>
    <property type="molecule type" value="Genomic_DNA"/>
</dbReference>
<dbReference type="RefSeq" id="WP_000548467.1">
    <property type="nucleotide sequence ID" value="NC_011586.2"/>
</dbReference>
<dbReference type="SMR" id="B7I6M5"/>
<dbReference type="KEGG" id="abn:AB57_1989"/>
<dbReference type="HOGENOM" id="CLU_061120_0_0_6"/>
<dbReference type="UniPathway" id="UPA00539"/>
<dbReference type="Proteomes" id="UP000007094">
    <property type="component" value="Chromosome"/>
</dbReference>
<dbReference type="GO" id="GO:0018189">
    <property type="term" value="P:pyrroloquinoline quinone biosynthetic process"/>
    <property type="evidence" value="ECO:0007669"/>
    <property type="project" value="UniProtKB-UniRule"/>
</dbReference>
<dbReference type="CDD" id="cd16274">
    <property type="entry name" value="PQQB-like_MBL-fold"/>
    <property type="match status" value="1"/>
</dbReference>
<dbReference type="Gene3D" id="3.60.15.10">
    <property type="entry name" value="Ribonuclease Z/Hydroxyacylglutathione hydrolase-like"/>
    <property type="match status" value="1"/>
</dbReference>
<dbReference type="HAMAP" id="MF_00653">
    <property type="entry name" value="PQQ_syn_PqqB"/>
    <property type="match status" value="1"/>
</dbReference>
<dbReference type="InterPro" id="IPR001279">
    <property type="entry name" value="Metallo-B-lactamas"/>
</dbReference>
<dbReference type="InterPro" id="IPR011842">
    <property type="entry name" value="PQQ_synth_PqqB"/>
</dbReference>
<dbReference type="InterPro" id="IPR036866">
    <property type="entry name" value="RibonucZ/Hydroxyglut_hydro"/>
</dbReference>
<dbReference type="NCBIfam" id="TIGR02108">
    <property type="entry name" value="PQQ_syn_pqqB"/>
    <property type="match status" value="1"/>
</dbReference>
<dbReference type="PANTHER" id="PTHR42663:SF7">
    <property type="entry name" value="COENZYME PQQ SYNTHESIS PROTEIN B"/>
    <property type="match status" value="1"/>
</dbReference>
<dbReference type="PANTHER" id="PTHR42663">
    <property type="entry name" value="HYDROLASE C777.06C-RELATED-RELATED"/>
    <property type="match status" value="1"/>
</dbReference>
<dbReference type="Pfam" id="PF12706">
    <property type="entry name" value="Lactamase_B_2"/>
    <property type="match status" value="1"/>
</dbReference>
<dbReference type="SUPFAM" id="SSF56281">
    <property type="entry name" value="Metallo-hydrolase/oxidoreductase"/>
    <property type="match status" value="1"/>
</dbReference>
<proteinExistence type="inferred from homology"/>
<protein>
    <recommendedName>
        <fullName evidence="1">Coenzyme PQQ synthesis protein B</fullName>
    </recommendedName>
    <alternativeName>
        <fullName evidence="1">Pyrroloquinoline quinone biosynthesis protein B</fullName>
    </alternativeName>
</protein>
<comment type="function">
    <text evidence="1">May be involved in the transport of PQQ or its precursor to the periplasm.</text>
</comment>
<comment type="pathway">
    <text evidence="1">Cofactor biosynthesis; pyrroloquinoline quinone biosynthesis.</text>
</comment>
<comment type="similarity">
    <text evidence="1">Belongs to the PqqB family.</text>
</comment>
<gene>
    <name evidence="1" type="primary">pqqB</name>
    <name type="ordered locus">AB57_1989</name>
</gene>
<feature type="chain" id="PRO_1000131156" description="Coenzyme PQQ synthesis protein B">
    <location>
        <begin position="1"/>
        <end position="303"/>
    </location>
</feature>
<evidence type="ECO:0000255" key="1">
    <source>
        <dbReference type="HAMAP-Rule" id="MF_00653"/>
    </source>
</evidence>
<sequence>MHIYILGSAAGGGFPQWNCNCPNCHGVRTGTINAKVRTQSSIAISENGVDWILLNASPDIRQQLFDFKAAQPARKLRDTGITNVILMDSQLDHTTGLLTLREGCPINVWCTEMVYQDLTTGFPVFNMLKHWNGGLLYHQIDPKQAFKIDGFENLEFLPLIIQSAAPPYSPHRHDPHEGDNIALIIKDHKTQKQLFYAPGLGKIDDQIMQIMQDSDCVMIDGTLWTDDEMQQTGVGKKTGREMGHLYISGEGGSLSYLNQLSTPKKVLIHINNTNPILNEDSAQFAELKANDVEVAFDGMQIEL</sequence>
<organism>
    <name type="scientific">Acinetobacter baumannii (strain AB0057)</name>
    <dbReference type="NCBI Taxonomy" id="480119"/>
    <lineage>
        <taxon>Bacteria</taxon>
        <taxon>Pseudomonadati</taxon>
        <taxon>Pseudomonadota</taxon>
        <taxon>Gammaproteobacteria</taxon>
        <taxon>Moraxellales</taxon>
        <taxon>Moraxellaceae</taxon>
        <taxon>Acinetobacter</taxon>
        <taxon>Acinetobacter calcoaceticus/baumannii complex</taxon>
    </lineage>
</organism>
<accession>B7I6M5</accession>